<comment type="function">
    <text>Catalyzes the 3'-hydroxylation of the flavonoid B-ring to the 3',4'-hydroxylated state. Convert naringenin to eriodictyol and dihydrokaempferol to dihydroquercetin.</text>
</comment>
<comment type="catalytic activity">
    <reaction>
        <text>a 3'-unsubstituted flavone + reduced [NADPH--hemoprotein reductase] + O2 = a 3'-hydroxyflavone + oxidized [NADPH--hemoprotein reductase] + H2O + H(+)</text>
        <dbReference type="Rhea" id="RHEA:16337"/>
        <dbReference type="Rhea" id="RHEA-COMP:11964"/>
        <dbReference type="Rhea" id="RHEA-COMP:11965"/>
        <dbReference type="ChEBI" id="CHEBI:15377"/>
        <dbReference type="ChEBI" id="CHEBI:15378"/>
        <dbReference type="ChEBI" id="CHEBI:15379"/>
        <dbReference type="ChEBI" id="CHEBI:27741"/>
        <dbReference type="ChEBI" id="CHEBI:57618"/>
        <dbReference type="ChEBI" id="CHEBI:58210"/>
        <dbReference type="ChEBI" id="CHEBI:138726"/>
        <dbReference type="EC" id="1.14.14.82"/>
    </reaction>
</comment>
<comment type="cofactor">
    <cofactor evidence="1">
        <name>heme</name>
        <dbReference type="ChEBI" id="CHEBI:30413"/>
    </cofactor>
</comment>
<comment type="pathway">
    <text>Secondary metabolite biosynthesis; flavonoid biosynthesis.</text>
</comment>
<comment type="subcellular location">
    <subcellularLocation>
        <location evidence="3">Endoplasmic reticulum membrane</location>
        <topology evidence="3">Single-pass type III membrane protein</topology>
    </subcellularLocation>
</comment>
<comment type="tissue specificity">
    <text>High expression in petals and ovaries and to a lower extent in sepals, pedicels, anthers and stems. Not detected in leaves, style or roots.</text>
</comment>
<comment type="developmental stage">
    <text>High expression early in flower development and then declines as the corolla becomes fully pigmented and opened.</text>
</comment>
<comment type="miscellaneous">
    <text>May act as a membrane anchor for localization of other, soluble, flavonoid enzymes to the endoplasmic reticulum.</text>
</comment>
<comment type="similarity">
    <text evidence="3">Belongs to the cytochrome P450 family.</text>
</comment>
<feature type="chain" id="PRO_0000052137" description="Flavonoid 3'-monooxygenase">
    <location>
        <begin position="1"/>
        <end position="512"/>
    </location>
</feature>
<feature type="transmembrane region" description="Helical" evidence="2">
    <location>
        <begin position="1"/>
        <end position="21"/>
    </location>
</feature>
<feature type="topological domain" description="Cytoplasmic" evidence="2">
    <location>
        <begin position="22"/>
        <end position="512"/>
    </location>
</feature>
<feature type="binding site" description="axial binding residue" evidence="1">
    <location>
        <position position="447"/>
    </location>
    <ligand>
        <name>heme</name>
        <dbReference type="ChEBI" id="CHEBI:30413"/>
    </ligand>
    <ligandPart>
        <name>Fe</name>
        <dbReference type="ChEBI" id="CHEBI:18248"/>
    </ligandPart>
</feature>
<evidence type="ECO:0000250" key="1"/>
<evidence type="ECO:0000255" key="2"/>
<evidence type="ECO:0000305" key="3"/>
<proteinExistence type="evidence at transcript level"/>
<gene>
    <name type="primary">CYP75B2</name>
    <name type="synonym">HT1</name>
</gene>
<accession>Q9SBQ9</accession>
<protein>
    <recommendedName>
        <fullName>Flavonoid 3'-monooxygenase</fullName>
        <ecNumber>1.14.14.82</ecNumber>
    </recommendedName>
    <alternativeName>
        <fullName>Cytochrome P450 75B2</fullName>
    </alternativeName>
    <alternativeName>
        <fullName>Flavonoid 3'-hydroxylase</fullName>
    </alternativeName>
</protein>
<name>F3PH_PETHY</name>
<sequence length="512" mass="56936">MEILSLILYTVIFSFLLQFILRSFFRKRYPLPLPPGPKPWPIIGNLVHLGPKPHQSTAAMAQTYGPLMYLKMGFVDVVVAASASVAAQFLKTHDANFSSRPPNSGAEHMAYNYQDLVFAPYGPRWRMLRKICSVHLFSTKALDDFRHVRQDEVKTLTRALASAGQKPVKLGQLLNVCTTNALARVMLGKRVFADGSGDVDPQAAEFKSMVVEMMVVAGVFNIGDFIPQLNWLDIQGVAAKMKKLHARFDAFLTDILEEHKGKIFGEMKDLLSTLISLKNDDADNDGGKLTDTEIKALLLNLFVAGTDTSSSTVEWAIAELIRNPKILAQAQQEIDKVVGRDRLVGELDLAQLTYLEAIVKETFRLHPSTPLSLPRIASESCEINGYFIPKGSTLLLNVWAIARDPNAWADPLEFRPERFLPGGEKPKVDVRGNDFEVIPFGAGRRICAGMNLGIRMVQLMIATLIHAFNWDLVSGQLPEMLNMEEAYGLTLQRADPLVVHPRPRLEAQAYIG</sequence>
<reference key="1">
    <citation type="journal article" date="1999" name="Plant J.">
        <title>Isolation and characterization of a flavonoid 3'-hydroxylase cDNA clone corresponding to the Ht1 locus of Petunia hybrida.</title>
        <authorList>
            <person name="Brugliera F."/>
            <person name="Barri-Rewell G."/>
            <person name="Holton T.A."/>
            <person name="Mason J.G."/>
        </authorList>
    </citation>
    <scope>NUCLEOTIDE SEQUENCE [MRNA]</scope>
    <source>
        <strain>cv. Old Glory Red</strain>
        <tissue>Corolla</tissue>
    </source>
</reference>
<dbReference type="EC" id="1.14.14.82"/>
<dbReference type="EMBL" id="AF155332">
    <property type="protein sequence ID" value="AAD56282.1"/>
    <property type="molecule type" value="mRNA"/>
</dbReference>
<dbReference type="SMR" id="Q9SBQ9"/>
<dbReference type="KEGG" id="ag:AAD56282"/>
<dbReference type="BRENDA" id="1.14.14.82">
    <property type="organism ID" value="4700"/>
</dbReference>
<dbReference type="UniPathway" id="UPA00154"/>
<dbReference type="GO" id="GO:0005789">
    <property type="term" value="C:endoplasmic reticulum membrane"/>
    <property type="evidence" value="ECO:0007669"/>
    <property type="project" value="UniProtKB-SubCell"/>
</dbReference>
<dbReference type="GO" id="GO:0016711">
    <property type="term" value="F:flavonoid 3'-monooxygenase activity"/>
    <property type="evidence" value="ECO:0007669"/>
    <property type="project" value="UniProtKB-EC"/>
</dbReference>
<dbReference type="GO" id="GO:0020037">
    <property type="term" value="F:heme binding"/>
    <property type="evidence" value="ECO:0007669"/>
    <property type="project" value="InterPro"/>
</dbReference>
<dbReference type="GO" id="GO:0005506">
    <property type="term" value="F:iron ion binding"/>
    <property type="evidence" value="ECO:0007669"/>
    <property type="project" value="InterPro"/>
</dbReference>
<dbReference type="GO" id="GO:0009813">
    <property type="term" value="P:flavonoid biosynthetic process"/>
    <property type="evidence" value="ECO:0007669"/>
    <property type="project" value="UniProtKB-UniPathway"/>
</dbReference>
<dbReference type="CDD" id="cd20657">
    <property type="entry name" value="CYP75"/>
    <property type="match status" value="1"/>
</dbReference>
<dbReference type="FunFam" id="1.10.630.10:FF:000056">
    <property type="entry name" value="Red aleurone1"/>
    <property type="match status" value="1"/>
</dbReference>
<dbReference type="Gene3D" id="1.10.630.10">
    <property type="entry name" value="Cytochrome P450"/>
    <property type="match status" value="1"/>
</dbReference>
<dbReference type="InterPro" id="IPR001128">
    <property type="entry name" value="Cyt_P450"/>
</dbReference>
<dbReference type="InterPro" id="IPR017972">
    <property type="entry name" value="Cyt_P450_CS"/>
</dbReference>
<dbReference type="InterPro" id="IPR002401">
    <property type="entry name" value="Cyt_P450_E_grp-I"/>
</dbReference>
<dbReference type="InterPro" id="IPR036396">
    <property type="entry name" value="Cyt_P450_sf"/>
</dbReference>
<dbReference type="PANTHER" id="PTHR47944">
    <property type="entry name" value="CYTOCHROME P450 98A9"/>
    <property type="match status" value="1"/>
</dbReference>
<dbReference type="PANTHER" id="PTHR47944:SF18">
    <property type="entry name" value="FLAVONOID 3'-MONOOXYGENASE"/>
    <property type="match status" value="1"/>
</dbReference>
<dbReference type="Pfam" id="PF00067">
    <property type="entry name" value="p450"/>
    <property type="match status" value="1"/>
</dbReference>
<dbReference type="PRINTS" id="PR00463">
    <property type="entry name" value="EP450I"/>
</dbReference>
<dbReference type="PRINTS" id="PR00385">
    <property type="entry name" value="P450"/>
</dbReference>
<dbReference type="SUPFAM" id="SSF48264">
    <property type="entry name" value="Cytochrome P450"/>
    <property type="match status" value="1"/>
</dbReference>
<dbReference type="PROSITE" id="PS00086">
    <property type="entry name" value="CYTOCHROME_P450"/>
    <property type="match status" value="1"/>
</dbReference>
<keyword id="KW-0256">Endoplasmic reticulum</keyword>
<keyword id="KW-0284">Flavonoid biosynthesis</keyword>
<keyword id="KW-0349">Heme</keyword>
<keyword id="KW-0408">Iron</keyword>
<keyword id="KW-0472">Membrane</keyword>
<keyword id="KW-0479">Metal-binding</keyword>
<keyword id="KW-0503">Monooxygenase</keyword>
<keyword id="KW-0521">NADP</keyword>
<keyword id="KW-0560">Oxidoreductase</keyword>
<keyword id="KW-0812">Transmembrane</keyword>
<keyword id="KW-1133">Transmembrane helix</keyword>
<organism>
    <name type="scientific">Petunia hybrida</name>
    <name type="common">Petunia</name>
    <dbReference type="NCBI Taxonomy" id="4102"/>
    <lineage>
        <taxon>Eukaryota</taxon>
        <taxon>Viridiplantae</taxon>
        <taxon>Streptophyta</taxon>
        <taxon>Embryophyta</taxon>
        <taxon>Tracheophyta</taxon>
        <taxon>Spermatophyta</taxon>
        <taxon>Magnoliopsida</taxon>
        <taxon>eudicotyledons</taxon>
        <taxon>Gunneridae</taxon>
        <taxon>Pentapetalae</taxon>
        <taxon>asterids</taxon>
        <taxon>lamiids</taxon>
        <taxon>Solanales</taxon>
        <taxon>Solanaceae</taxon>
        <taxon>Petunioideae</taxon>
        <taxon>Petunia</taxon>
    </lineage>
</organism>